<proteinExistence type="inferred from homology"/>
<organism>
    <name type="scientific">Chlorobium phaeovibrioides (strain DSM 265 / 1930)</name>
    <name type="common">Prosthecochloris vibrioformis (strain DSM 265)</name>
    <dbReference type="NCBI Taxonomy" id="290318"/>
    <lineage>
        <taxon>Bacteria</taxon>
        <taxon>Pseudomonadati</taxon>
        <taxon>Chlorobiota</taxon>
        <taxon>Chlorobiia</taxon>
        <taxon>Chlorobiales</taxon>
        <taxon>Chlorobiaceae</taxon>
        <taxon>Chlorobium/Pelodictyon group</taxon>
        <taxon>Chlorobium</taxon>
    </lineage>
</organism>
<evidence type="ECO:0000255" key="1">
    <source>
        <dbReference type="HAMAP-Rule" id="MF_00373"/>
    </source>
</evidence>
<evidence type="ECO:0000305" key="2"/>
<name>RL28_CHLPM</name>
<gene>
    <name evidence="1" type="primary">rpmB</name>
    <name type="ordered locus">Cvib_1396</name>
</gene>
<sequence length="72" mass="8328">MSKVCVLTGKRPKYGNTVSHANNHRRTRFEPNLHTKRIWIEEEKRWAKVKLSAKAMRIIAKTGTGELAKLLK</sequence>
<feature type="chain" id="PRO_1000079859" description="Large ribosomal subunit protein bL28">
    <location>
        <begin position="1"/>
        <end position="72"/>
    </location>
</feature>
<keyword id="KW-0687">Ribonucleoprotein</keyword>
<keyword id="KW-0689">Ribosomal protein</keyword>
<accession>A4SFZ8</accession>
<reference key="1">
    <citation type="submission" date="2007-03" db="EMBL/GenBank/DDBJ databases">
        <title>Complete sequence of Prosthecochloris vibrioformis DSM 265.</title>
        <authorList>
            <consortium name="US DOE Joint Genome Institute"/>
            <person name="Copeland A."/>
            <person name="Lucas S."/>
            <person name="Lapidus A."/>
            <person name="Barry K."/>
            <person name="Detter J.C."/>
            <person name="Glavina del Rio T."/>
            <person name="Hammon N."/>
            <person name="Israni S."/>
            <person name="Pitluck S."/>
            <person name="Schmutz J."/>
            <person name="Larimer F."/>
            <person name="Land M."/>
            <person name="Hauser L."/>
            <person name="Mikhailova N."/>
            <person name="Li T."/>
            <person name="Overmann J."/>
            <person name="Schuster S.C."/>
            <person name="Bryant D.A."/>
            <person name="Richardson P."/>
        </authorList>
    </citation>
    <scope>NUCLEOTIDE SEQUENCE [LARGE SCALE GENOMIC DNA]</scope>
    <source>
        <strain>DSM 265 / 1930</strain>
    </source>
</reference>
<dbReference type="EMBL" id="CP000607">
    <property type="protein sequence ID" value="ABP37407.1"/>
    <property type="molecule type" value="Genomic_DNA"/>
</dbReference>
<dbReference type="SMR" id="A4SFZ8"/>
<dbReference type="STRING" id="290318.Cvib_1396"/>
<dbReference type="KEGG" id="pvi:Cvib_1396"/>
<dbReference type="eggNOG" id="COG0227">
    <property type="taxonomic scope" value="Bacteria"/>
</dbReference>
<dbReference type="HOGENOM" id="CLU_064548_3_1_10"/>
<dbReference type="OrthoDB" id="9805609at2"/>
<dbReference type="GO" id="GO:1990904">
    <property type="term" value="C:ribonucleoprotein complex"/>
    <property type="evidence" value="ECO:0007669"/>
    <property type="project" value="UniProtKB-KW"/>
</dbReference>
<dbReference type="GO" id="GO:0005840">
    <property type="term" value="C:ribosome"/>
    <property type="evidence" value="ECO:0007669"/>
    <property type="project" value="UniProtKB-KW"/>
</dbReference>
<dbReference type="GO" id="GO:0003735">
    <property type="term" value="F:structural constituent of ribosome"/>
    <property type="evidence" value="ECO:0007669"/>
    <property type="project" value="InterPro"/>
</dbReference>
<dbReference type="GO" id="GO:0006412">
    <property type="term" value="P:translation"/>
    <property type="evidence" value="ECO:0007669"/>
    <property type="project" value="UniProtKB-UniRule"/>
</dbReference>
<dbReference type="Gene3D" id="2.30.170.40">
    <property type="entry name" value="Ribosomal protein L28/L24"/>
    <property type="match status" value="1"/>
</dbReference>
<dbReference type="HAMAP" id="MF_00373">
    <property type="entry name" value="Ribosomal_bL28"/>
    <property type="match status" value="1"/>
</dbReference>
<dbReference type="InterPro" id="IPR050096">
    <property type="entry name" value="Bacterial_rp_bL28"/>
</dbReference>
<dbReference type="InterPro" id="IPR026569">
    <property type="entry name" value="Ribosomal_bL28"/>
</dbReference>
<dbReference type="InterPro" id="IPR034704">
    <property type="entry name" value="Ribosomal_bL28/bL31-like_sf"/>
</dbReference>
<dbReference type="InterPro" id="IPR001383">
    <property type="entry name" value="Ribosomal_bL28_bact-type"/>
</dbReference>
<dbReference type="InterPro" id="IPR037147">
    <property type="entry name" value="Ribosomal_bL28_sf"/>
</dbReference>
<dbReference type="NCBIfam" id="TIGR00009">
    <property type="entry name" value="L28"/>
    <property type="match status" value="1"/>
</dbReference>
<dbReference type="PANTHER" id="PTHR39080">
    <property type="entry name" value="50S RIBOSOMAL PROTEIN L28"/>
    <property type="match status" value="1"/>
</dbReference>
<dbReference type="PANTHER" id="PTHR39080:SF1">
    <property type="entry name" value="LARGE RIBOSOMAL SUBUNIT PROTEIN BL28A"/>
    <property type="match status" value="1"/>
</dbReference>
<dbReference type="Pfam" id="PF00830">
    <property type="entry name" value="Ribosomal_L28"/>
    <property type="match status" value="1"/>
</dbReference>
<dbReference type="SUPFAM" id="SSF143800">
    <property type="entry name" value="L28p-like"/>
    <property type="match status" value="1"/>
</dbReference>
<protein>
    <recommendedName>
        <fullName evidence="1">Large ribosomal subunit protein bL28</fullName>
    </recommendedName>
    <alternativeName>
        <fullName evidence="2">50S ribosomal protein L28</fullName>
    </alternativeName>
</protein>
<comment type="similarity">
    <text evidence="1">Belongs to the bacterial ribosomal protein bL28 family.</text>
</comment>